<accession>P9WQG7</accession>
<accession>L0T4S8</accession>
<accession>O06632</accession>
<accession>Q7D995</accession>
<gene>
    <name type="ordered locus">Rv0802c</name>
</gene>
<organism>
    <name type="scientific">Mycobacterium tuberculosis (strain ATCC 25618 / H37Rv)</name>
    <dbReference type="NCBI Taxonomy" id="83332"/>
    <lineage>
        <taxon>Bacteria</taxon>
        <taxon>Bacillati</taxon>
        <taxon>Actinomycetota</taxon>
        <taxon>Actinomycetes</taxon>
        <taxon>Mycobacteriales</taxon>
        <taxon>Mycobacteriaceae</taxon>
        <taxon>Mycobacterium</taxon>
        <taxon>Mycobacterium tuberculosis complex</taxon>
    </lineage>
</organism>
<evidence type="ECO:0000250" key="1">
    <source>
        <dbReference type="UniProtKB" id="A5U0J1"/>
    </source>
</evidence>
<evidence type="ECO:0000255" key="2">
    <source>
        <dbReference type="PROSITE-ProRule" id="PRU00532"/>
    </source>
</evidence>
<evidence type="ECO:0000269" key="3">
    <source>
    </source>
</evidence>
<evidence type="ECO:0000305" key="4">
    <source>
    </source>
</evidence>
<evidence type="ECO:0007829" key="5">
    <source>
        <dbReference type="PDB" id="2VZY"/>
    </source>
</evidence>
<evidence type="ECO:0007829" key="6">
    <source>
        <dbReference type="PDB" id="2VZZ"/>
    </source>
</evidence>
<keyword id="KW-0002">3D-structure</keyword>
<keyword id="KW-0012">Acyltransferase</keyword>
<keyword id="KW-1185">Reference proteome</keyword>
<keyword id="KW-0808">Transferase</keyword>
<dbReference type="EC" id="2.8.1.-" evidence="1"/>
<dbReference type="EMBL" id="AL123456">
    <property type="protein sequence ID" value="CCP43550.1"/>
    <property type="molecule type" value="Genomic_DNA"/>
</dbReference>
<dbReference type="PIR" id="C70536">
    <property type="entry name" value="C70536"/>
</dbReference>
<dbReference type="RefSeq" id="NP_215317.1">
    <property type="nucleotide sequence ID" value="NC_000962.3"/>
</dbReference>
<dbReference type="RefSeq" id="WP_003404111.1">
    <property type="nucleotide sequence ID" value="NZ_NVQJ01000064.1"/>
</dbReference>
<dbReference type="PDB" id="2VZY">
    <property type="method" value="X-ray"/>
    <property type="resolution" value="2.00 A"/>
    <property type="chains" value="A/B/C/D=1-218"/>
</dbReference>
<dbReference type="PDB" id="2VZZ">
    <property type="method" value="X-ray"/>
    <property type="resolution" value="2.30 A"/>
    <property type="chains" value="A/B/C/D=1-218"/>
</dbReference>
<dbReference type="PDBsum" id="2VZY"/>
<dbReference type="PDBsum" id="2VZZ"/>
<dbReference type="SMR" id="P9WQG7"/>
<dbReference type="STRING" id="83332.Rv0802c"/>
<dbReference type="PaxDb" id="83332-Rv0802c"/>
<dbReference type="DNASU" id="885332"/>
<dbReference type="GeneID" id="885332"/>
<dbReference type="KEGG" id="mtu:Rv0802c"/>
<dbReference type="KEGG" id="mtv:RVBD_0802c"/>
<dbReference type="TubercuList" id="Rv0802c"/>
<dbReference type="eggNOG" id="COG1670">
    <property type="taxonomic scope" value="Bacteria"/>
</dbReference>
<dbReference type="InParanoid" id="P9WQG7"/>
<dbReference type="OrthoDB" id="3466127at2"/>
<dbReference type="PhylomeDB" id="P9WQG7"/>
<dbReference type="EvolutionaryTrace" id="P9WQG7"/>
<dbReference type="Proteomes" id="UP000001584">
    <property type="component" value="Chromosome"/>
</dbReference>
<dbReference type="GO" id="GO:0005737">
    <property type="term" value="C:cytoplasm"/>
    <property type="evidence" value="ECO:0000318"/>
    <property type="project" value="GO_Central"/>
</dbReference>
<dbReference type="GO" id="GO:1990189">
    <property type="term" value="F:protein N-terminal-serine acetyltransferase activity"/>
    <property type="evidence" value="ECO:0000318"/>
    <property type="project" value="GO_Central"/>
</dbReference>
<dbReference type="GO" id="GO:0061733">
    <property type="term" value="F:protein-lysine-acetyltransferase activity"/>
    <property type="evidence" value="ECO:0007669"/>
    <property type="project" value="RHEA"/>
</dbReference>
<dbReference type="GO" id="GO:0008999">
    <property type="term" value="F:protein-N-terminal-alanine acetyltransferase activity"/>
    <property type="evidence" value="ECO:0000318"/>
    <property type="project" value="GO_Central"/>
</dbReference>
<dbReference type="GO" id="GO:0006104">
    <property type="term" value="P:succinyl-CoA metabolic process"/>
    <property type="evidence" value="ECO:0000314"/>
    <property type="project" value="MTBBASE"/>
</dbReference>
<dbReference type="FunFam" id="3.40.630.30:FF:000176">
    <property type="entry name" value="Putative succinyl-CoA transferase Rv0802c"/>
    <property type="match status" value="1"/>
</dbReference>
<dbReference type="Gene3D" id="3.40.630.30">
    <property type="match status" value="1"/>
</dbReference>
<dbReference type="InterPro" id="IPR016181">
    <property type="entry name" value="Acyl_CoA_acyltransferase"/>
</dbReference>
<dbReference type="InterPro" id="IPR000182">
    <property type="entry name" value="GNAT_dom"/>
</dbReference>
<dbReference type="InterPro" id="IPR051908">
    <property type="entry name" value="Ribosomal_N-acetyltransferase"/>
</dbReference>
<dbReference type="PANTHER" id="PTHR43441">
    <property type="entry name" value="RIBOSOMAL-PROTEIN-SERINE ACETYLTRANSFERASE"/>
    <property type="match status" value="1"/>
</dbReference>
<dbReference type="PANTHER" id="PTHR43441:SF11">
    <property type="entry name" value="RIBOSOMAL-PROTEIN-SERINE ACETYLTRANSFERASE"/>
    <property type="match status" value="1"/>
</dbReference>
<dbReference type="Pfam" id="PF13302">
    <property type="entry name" value="Acetyltransf_3"/>
    <property type="match status" value="1"/>
</dbReference>
<dbReference type="SUPFAM" id="SSF55729">
    <property type="entry name" value="Acyl-CoA N-acyltransferases (Nat)"/>
    <property type="match status" value="1"/>
</dbReference>
<dbReference type="PROSITE" id="PS51186">
    <property type="entry name" value="GNAT"/>
    <property type="match status" value="1"/>
</dbReference>
<reference key="1">
    <citation type="journal article" date="1998" name="Nature">
        <title>Deciphering the biology of Mycobacterium tuberculosis from the complete genome sequence.</title>
        <authorList>
            <person name="Cole S.T."/>
            <person name="Brosch R."/>
            <person name="Parkhill J."/>
            <person name="Garnier T."/>
            <person name="Churcher C.M."/>
            <person name="Harris D.E."/>
            <person name="Gordon S.V."/>
            <person name="Eiglmeier K."/>
            <person name="Gas S."/>
            <person name="Barry C.E. III"/>
            <person name="Tekaia F."/>
            <person name="Badcock K."/>
            <person name="Basham D."/>
            <person name="Brown D."/>
            <person name="Chillingworth T."/>
            <person name="Connor R."/>
            <person name="Davies R.M."/>
            <person name="Devlin K."/>
            <person name="Feltwell T."/>
            <person name="Gentles S."/>
            <person name="Hamlin N."/>
            <person name="Holroyd S."/>
            <person name="Hornsby T."/>
            <person name="Jagels K."/>
            <person name="Krogh A."/>
            <person name="McLean J."/>
            <person name="Moule S."/>
            <person name="Murphy L.D."/>
            <person name="Oliver S."/>
            <person name="Osborne J."/>
            <person name="Quail M.A."/>
            <person name="Rajandream M.A."/>
            <person name="Rogers J."/>
            <person name="Rutter S."/>
            <person name="Seeger K."/>
            <person name="Skelton S."/>
            <person name="Squares S."/>
            <person name="Squares R."/>
            <person name="Sulston J.E."/>
            <person name="Taylor K."/>
            <person name="Whitehead S."/>
            <person name="Barrell B.G."/>
        </authorList>
    </citation>
    <scope>NUCLEOTIDE SEQUENCE [LARGE SCALE GENOMIC DNA]</scope>
    <source>
        <strain>ATCC 25618 / H37Rv</strain>
    </source>
</reference>
<reference key="2">
    <citation type="journal article" date="2005" name="Acta Microbiol. Immunol. Hung.">
        <title>Rv0802c acetyltransferase from Mycobacterium tuberculosis H37Rv.</title>
        <authorList>
            <person name="Kovacs L."/>
            <person name="Csanadi A."/>
            <person name="Kiss E."/>
            <person name="Miczak A."/>
        </authorList>
    </citation>
    <scope>IDENTIFICATION</scope>
</reference>
<reference key="3">
    <citation type="journal article" date="2011" name="Mol. Cell. Proteomics">
        <title>Proteogenomic analysis of Mycobacterium tuberculosis by high resolution mass spectrometry.</title>
        <authorList>
            <person name="Kelkar D.S."/>
            <person name="Kumar D."/>
            <person name="Kumar P."/>
            <person name="Balakrishnan L."/>
            <person name="Muthusamy B."/>
            <person name="Yadav A.K."/>
            <person name="Shrivastava P."/>
            <person name="Marimuthu A."/>
            <person name="Anand S."/>
            <person name="Sundaram H."/>
            <person name="Kingsbury R."/>
            <person name="Harsha H.C."/>
            <person name="Nair B."/>
            <person name="Prasad T.S."/>
            <person name="Chauhan D.S."/>
            <person name="Katoch K."/>
            <person name="Katoch V.M."/>
            <person name="Kumar P."/>
            <person name="Chaerkady R."/>
            <person name="Ramachandran S."/>
            <person name="Dash D."/>
            <person name="Pandey A."/>
        </authorList>
    </citation>
    <scope>IDENTIFICATION BY MASS SPECTROMETRY [LARGE SCALE ANALYSIS]</scope>
    <source>
        <strain>ATCC 25618 / H37Rv</strain>
    </source>
</reference>
<reference key="4">
    <citation type="journal article" date="2008" name="Acta Crystallogr. F">
        <title>Rv0802c from Mycobacterium tuberculosis: the first structure of a succinyltransferase with the GNAT fold.</title>
        <authorList>
            <person name="Vetting M.W."/>
            <person name="Errey J.C."/>
            <person name="Blanchard J.S."/>
        </authorList>
    </citation>
    <scope>X-RAY CRYSTALLOGRAPHY (2.00 ANGSTROMS) IN COMPLEX WITH SUBSTRATE ANALOGS</scope>
    <scope>SUBUNIT</scope>
    <scope>PUTATIVE FUNCTION</scope>
</reference>
<protein>
    <recommendedName>
        <fullName evidence="1">Acetyl- and succinyl-CoA transferase Rv0802c</fullName>
        <ecNumber evidence="1">2.8.1.-</ecNumber>
    </recommendedName>
</protein>
<sequence>MSRHWPLFDLRITTPRLQLQLPTEELCDQLIDTILEGVHDPDRMPFSVPWTRASREDLPFNTLSHLWQQLAGFKRDDWSLPLAVLVDGRAVGVQALSSKDFPITRQVDSGSWLGLRYQGHGYGTEMRAAVLYFAFAELEAQVATSRSFVDNPASIAVSRRNGYRDNGLDRVAREGAMAEALLFRLTRDDWQRHRTVEVRVDGFDRCRPLFGPLEPPRY</sequence>
<proteinExistence type="evidence at protein level"/>
<comment type="function">
    <text evidence="1 4">Acetylates and succinylates nucleoid-associated, DNA-binding protein HupB.</text>
</comment>
<comment type="catalytic activity">
    <reaction evidence="1">
        <text>L-lysyl-[protein] + acetyl-CoA = N(6)-acetyl-L-lysyl-[protein] + CoA + H(+)</text>
        <dbReference type="Rhea" id="RHEA:45948"/>
        <dbReference type="Rhea" id="RHEA-COMP:9752"/>
        <dbReference type="Rhea" id="RHEA-COMP:10731"/>
        <dbReference type="ChEBI" id="CHEBI:15378"/>
        <dbReference type="ChEBI" id="CHEBI:29969"/>
        <dbReference type="ChEBI" id="CHEBI:57287"/>
        <dbReference type="ChEBI" id="CHEBI:57288"/>
        <dbReference type="ChEBI" id="CHEBI:61930"/>
    </reaction>
</comment>
<comment type="catalytic activity">
    <reaction evidence="1">
        <text>succinyl-CoA + L-lysyl-[protein] = N(6)-succinyl-L-lysyl-[protein] + CoA + H(+)</text>
        <dbReference type="Rhea" id="RHEA:16261"/>
        <dbReference type="Rhea" id="RHEA-COMP:9752"/>
        <dbReference type="Rhea" id="RHEA-COMP:11877"/>
        <dbReference type="ChEBI" id="CHEBI:15378"/>
        <dbReference type="ChEBI" id="CHEBI:29969"/>
        <dbReference type="ChEBI" id="CHEBI:57287"/>
        <dbReference type="ChEBI" id="CHEBI:57292"/>
        <dbReference type="ChEBI" id="CHEBI:87830"/>
    </reaction>
</comment>
<comment type="subunit">
    <text evidence="3">Dimer of dimers.</text>
</comment>
<feature type="chain" id="PRO_0000414586" description="Acetyl- and succinyl-CoA transferase Rv0802c">
    <location>
        <begin position="1"/>
        <end position="218"/>
    </location>
</feature>
<feature type="domain" description="N-acetyltransferase" evidence="2">
    <location>
        <begin position="32"/>
        <end position="188"/>
    </location>
</feature>
<feature type="binding site" evidence="4">
    <location>
        <position position="94"/>
    </location>
    <ligand>
        <name>substrate</name>
    </ligand>
</feature>
<feature type="binding site" evidence="4">
    <location>
        <begin position="109"/>
        <end position="113"/>
    </location>
    <ligand>
        <name>substrate</name>
    </ligand>
</feature>
<feature type="binding site" evidence="4">
    <location>
        <begin position="119"/>
        <end position="124"/>
    </location>
    <ligand>
        <name>substrate</name>
    </ligand>
</feature>
<feature type="binding site" evidence="4">
    <location>
        <begin position="145"/>
        <end position="151"/>
    </location>
    <ligand>
        <name>substrate</name>
    </ligand>
</feature>
<feature type="binding site" evidence="4">
    <location>
        <position position="160"/>
    </location>
    <ligand>
        <name>substrate</name>
    </ligand>
</feature>
<feature type="helix" evidence="5">
    <location>
        <begin position="6"/>
        <end position="9"/>
    </location>
</feature>
<feature type="strand" evidence="5">
    <location>
        <begin position="11"/>
        <end position="13"/>
    </location>
</feature>
<feature type="strand" evidence="5">
    <location>
        <begin position="15"/>
        <end position="20"/>
    </location>
</feature>
<feature type="helix" evidence="5">
    <location>
        <begin position="24"/>
        <end position="35"/>
    </location>
</feature>
<feature type="strand" evidence="6">
    <location>
        <begin position="46"/>
        <end position="48"/>
    </location>
</feature>
<feature type="helix" evidence="6">
    <location>
        <begin position="50"/>
        <end position="52"/>
    </location>
</feature>
<feature type="turn" evidence="6">
    <location>
        <begin position="55"/>
        <end position="57"/>
    </location>
</feature>
<feature type="helix" evidence="5">
    <location>
        <begin position="58"/>
        <end position="71"/>
    </location>
</feature>
<feature type="strand" evidence="5">
    <location>
        <begin position="77"/>
        <end position="86"/>
    </location>
</feature>
<feature type="strand" evidence="5">
    <location>
        <begin position="89"/>
        <end position="100"/>
    </location>
</feature>
<feature type="helix" evidence="5">
    <location>
        <begin position="101"/>
        <end position="104"/>
    </location>
</feature>
<feature type="strand" evidence="5">
    <location>
        <begin position="106"/>
        <end position="113"/>
    </location>
</feature>
<feature type="helix" evidence="5">
    <location>
        <begin position="115"/>
        <end position="117"/>
    </location>
</feature>
<feature type="strand" evidence="6">
    <location>
        <begin position="119"/>
        <end position="121"/>
    </location>
</feature>
<feature type="helix" evidence="5">
    <location>
        <begin position="122"/>
        <end position="136"/>
    </location>
</feature>
<feature type="strand" evidence="5">
    <location>
        <begin position="141"/>
        <end position="148"/>
    </location>
</feature>
<feature type="helix" evidence="5">
    <location>
        <begin position="152"/>
        <end position="160"/>
    </location>
</feature>
<feature type="strand" evidence="5">
    <location>
        <begin position="164"/>
        <end position="173"/>
    </location>
</feature>
<feature type="strand" evidence="5">
    <location>
        <begin position="176"/>
        <end position="186"/>
    </location>
</feature>
<feature type="helix" evidence="5">
    <location>
        <begin position="187"/>
        <end position="193"/>
    </location>
</feature>
<feature type="strand" evidence="5">
    <location>
        <begin position="199"/>
        <end position="202"/>
    </location>
</feature>
<feature type="helix" evidence="5">
    <location>
        <begin position="204"/>
        <end position="206"/>
    </location>
</feature>
<feature type="helix" evidence="5">
    <location>
        <begin position="207"/>
        <end position="210"/>
    </location>
</feature>
<name>Y802_MYCTU</name>